<protein>
    <recommendedName>
        <fullName evidence="13">Autophagy-related protein 9A</fullName>
    </recommendedName>
    <alternativeName>
        <fullName evidence="12">APG9-like 1</fullName>
    </alternativeName>
</protein>
<dbReference type="EMBL" id="AM085510">
    <property type="protein sequence ID" value="CAJ30208.1"/>
    <property type="molecule type" value="mRNA"/>
</dbReference>
<dbReference type="EMBL" id="BC079884">
    <property type="protein sequence ID" value="AAH79884.1"/>
    <property type="molecule type" value="mRNA"/>
</dbReference>
<dbReference type="EMBL" id="BK004020">
    <property type="protein sequence ID" value="DAA05201.1"/>
    <property type="molecule type" value="mRNA"/>
</dbReference>
<dbReference type="CCDS" id="CCDS35622.1">
    <molecule id="Q68FE2-1"/>
</dbReference>
<dbReference type="RefSeq" id="NP_001003917.2">
    <molecule id="Q68FE2-1"/>
    <property type="nucleotide sequence ID" value="NM_001003917.5"/>
</dbReference>
<dbReference type="RefSeq" id="NP_001275541.1">
    <molecule id="Q68FE2-1"/>
    <property type="nucleotide sequence ID" value="NM_001288612.2"/>
</dbReference>
<dbReference type="RefSeq" id="NP_001395154.1">
    <molecule id="Q68FE2-1"/>
    <property type="nucleotide sequence ID" value="NM_001408225.1"/>
</dbReference>
<dbReference type="RefSeq" id="NP_001395156.1">
    <molecule id="Q68FE2-1"/>
    <property type="nucleotide sequence ID" value="NM_001408227.1"/>
</dbReference>
<dbReference type="RefSeq" id="XP_011236989.1">
    <property type="nucleotide sequence ID" value="XM_011238687.2"/>
</dbReference>
<dbReference type="RefSeq" id="XP_011236990.1">
    <property type="nucleotide sequence ID" value="XM_011238688.2"/>
</dbReference>
<dbReference type="SMR" id="Q68FE2"/>
<dbReference type="BioGRID" id="232841">
    <property type="interactions" value="3"/>
</dbReference>
<dbReference type="FunCoup" id="Q68FE2">
    <property type="interactions" value="3175"/>
</dbReference>
<dbReference type="IntAct" id="Q68FE2">
    <property type="interactions" value="4"/>
</dbReference>
<dbReference type="MINT" id="Q68FE2"/>
<dbReference type="STRING" id="10090.ENSMUSP00000139641"/>
<dbReference type="ChEMBL" id="CHEMBL4879478"/>
<dbReference type="GlyCosmos" id="Q68FE2">
    <property type="glycosylation" value="1 site, No reported glycans"/>
</dbReference>
<dbReference type="GlyGen" id="Q68FE2">
    <property type="glycosylation" value="1 site, 1 N-linked glycan (1 site)"/>
</dbReference>
<dbReference type="iPTMnet" id="Q68FE2"/>
<dbReference type="PhosphoSitePlus" id="Q68FE2"/>
<dbReference type="SwissPalm" id="Q68FE2"/>
<dbReference type="PaxDb" id="10090-ENSMUSP00000139608"/>
<dbReference type="PeptideAtlas" id="Q68FE2"/>
<dbReference type="ProteomicsDB" id="277065"/>
<dbReference type="ProteomicsDB" id="332895"/>
<dbReference type="Pumba" id="Q68FE2"/>
<dbReference type="DNASU" id="245860"/>
<dbReference type="Ensembl" id="ENSMUST00000040689.15">
    <molecule id="Q68FE2-1"/>
    <property type="protein sequence ID" value="ENSMUSP00000047449.9"/>
    <property type="gene ID" value="ENSMUSG00000033124.17"/>
</dbReference>
<dbReference type="Ensembl" id="ENSMUST00000188347.7">
    <molecule id="Q68FE2-1"/>
    <property type="protein sequence ID" value="ENSMUSP00000139731.2"/>
    <property type="gene ID" value="ENSMUSG00000033124.17"/>
</dbReference>
<dbReference type="Ensembl" id="ENSMUST00000189702.7">
    <molecule id="Q68FE2-1"/>
    <property type="protein sequence ID" value="ENSMUSP00000139641.2"/>
    <property type="gene ID" value="ENSMUSG00000033124.17"/>
</dbReference>
<dbReference type="Ensembl" id="ENSMUST00000239085.2">
    <molecule id="Q68FE2-2"/>
    <property type="protein sequence ID" value="ENSMUSP00000159170.2"/>
    <property type="gene ID" value="ENSMUSG00000033124.17"/>
</dbReference>
<dbReference type="GeneID" id="245860"/>
<dbReference type="KEGG" id="mmu:245860"/>
<dbReference type="UCSC" id="uc007bob.2">
    <property type="organism name" value="mouse"/>
</dbReference>
<dbReference type="AGR" id="MGI:2138446"/>
<dbReference type="CTD" id="79065"/>
<dbReference type="MGI" id="MGI:2138446">
    <property type="gene designation" value="Atg9a"/>
</dbReference>
<dbReference type="VEuPathDB" id="HostDB:ENSMUSG00000033124"/>
<dbReference type="eggNOG" id="KOG2173">
    <property type="taxonomic scope" value="Eukaryota"/>
</dbReference>
<dbReference type="GeneTree" id="ENSGT00390000014839"/>
<dbReference type="HOGENOM" id="CLU_006200_2_1_1"/>
<dbReference type="InParanoid" id="Q68FE2"/>
<dbReference type="OMA" id="IPTGECV"/>
<dbReference type="TreeFam" id="TF313665"/>
<dbReference type="Reactome" id="R-MMU-1632852">
    <property type="pathway name" value="Macroautophagy"/>
</dbReference>
<dbReference type="Reactome" id="R-MMU-5205685">
    <property type="pathway name" value="PINK1-PRKN Mediated Mitophagy"/>
</dbReference>
<dbReference type="BioGRID-ORCS" id="245860">
    <property type="hits" value="26 hits in 80 CRISPR screens"/>
</dbReference>
<dbReference type="ChiTaRS" id="Atg9a">
    <property type="organism name" value="mouse"/>
</dbReference>
<dbReference type="PRO" id="PR:Q68FE2"/>
<dbReference type="Proteomes" id="UP000000589">
    <property type="component" value="Chromosome 1"/>
</dbReference>
<dbReference type="RNAct" id="Q68FE2">
    <property type="molecule type" value="protein"/>
</dbReference>
<dbReference type="Bgee" id="ENSMUSG00000033124">
    <property type="expression patterns" value="Expressed in hindlimb stylopod muscle and 60 other cell types or tissues"/>
</dbReference>
<dbReference type="ExpressionAtlas" id="Q68FE2">
    <property type="expression patterns" value="baseline and differential"/>
</dbReference>
<dbReference type="GO" id="GO:0005776">
    <property type="term" value="C:autophagosome"/>
    <property type="evidence" value="ECO:0000314"/>
    <property type="project" value="MGI"/>
</dbReference>
<dbReference type="GO" id="GO:0005737">
    <property type="term" value="C:cytoplasm"/>
    <property type="evidence" value="ECO:0000314"/>
    <property type="project" value="MGI"/>
</dbReference>
<dbReference type="GO" id="GO:0005789">
    <property type="term" value="C:endoplasmic reticulum membrane"/>
    <property type="evidence" value="ECO:0000314"/>
    <property type="project" value="UniProtKB"/>
</dbReference>
<dbReference type="GO" id="GO:0005768">
    <property type="term" value="C:endosome"/>
    <property type="evidence" value="ECO:0000266"/>
    <property type="project" value="MGI"/>
</dbReference>
<dbReference type="GO" id="GO:0000139">
    <property type="term" value="C:Golgi membrane"/>
    <property type="evidence" value="ECO:0000314"/>
    <property type="project" value="UniProtKB"/>
</dbReference>
<dbReference type="GO" id="GO:0005770">
    <property type="term" value="C:late endosome"/>
    <property type="evidence" value="ECO:0000266"/>
    <property type="project" value="MGI"/>
</dbReference>
<dbReference type="GO" id="GO:0031902">
    <property type="term" value="C:late endosome membrane"/>
    <property type="evidence" value="ECO:0007669"/>
    <property type="project" value="UniProtKB-SubCell"/>
</dbReference>
<dbReference type="GO" id="GO:0031966">
    <property type="term" value="C:mitochondrial membrane"/>
    <property type="evidence" value="ECO:0007669"/>
    <property type="project" value="UniProtKB-SubCell"/>
</dbReference>
<dbReference type="GO" id="GO:0005739">
    <property type="term" value="C:mitochondrion"/>
    <property type="evidence" value="ECO:0000250"/>
    <property type="project" value="UniProtKB"/>
</dbReference>
<dbReference type="GO" id="GO:0000407">
    <property type="term" value="C:phagophore assembly site"/>
    <property type="evidence" value="ECO:0000266"/>
    <property type="project" value="MGI"/>
</dbReference>
<dbReference type="GO" id="GO:0034045">
    <property type="term" value="C:phagophore assembly site membrane"/>
    <property type="evidence" value="ECO:0007669"/>
    <property type="project" value="UniProtKB-SubCell"/>
</dbReference>
<dbReference type="GO" id="GO:0055037">
    <property type="term" value="C:recycling endosome"/>
    <property type="evidence" value="ECO:0000266"/>
    <property type="project" value="MGI"/>
</dbReference>
<dbReference type="GO" id="GO:0055038">
    <property type="term" value="C:recycling endosome membrane"/>
    <property type="evidence" value="ECO:0000250"/>
    <property type="project" value="UniProtKB"/>
</dbReference>
<dbReference type="GO" id="GO:0097060">
    <property type="term" value="C:synaptic membrane"/>
    <property type="evidence" value="ECO:0000314"/>
    <property type="project" value="SynGO"/>
</dbReference>
<dbReference type="GO" id="GO:0005802">
    <property type="term" value="C:trans-Golgi network"/>
    <property type="evidence" value="ECO:0000250"/>
    <property type="project" value="UniProtKB"/>
</dbReference>
<dbReference type="GO" id="GO:0017128">
    <property type="term" value="F:phospholipid scramblase activity"/>
    <property type="evidence" value="ECO:0000250"/>
    <property type="project" value="UniProtKB"/>
</dbReference>
<dbReference type="GO" id="GO:0000045">
    <property type="term" value="P:autophagosome assembly"/>
    <property type="evidence" value="ECO:0000315"/>
    <property type="project" value="MGI"/>
</dbReference>
<dbReference type="GO" id="GO:0006914">
    <property type="term" value="P:autophagy"/>
    <property type="evidence" value="ECO:0000315"/>
    <property type="project" value="UniProtKB"/>
</dbReference>
<dbReference type="GO" id="GO:0060349">
    <property type="term" value="P:bone morphogenesis"/>
    <property type="evidence" value="ECO:0000315"/>
    <property type="project" value="UniProtKB"/>
</dbReference>
<dbReference type="GO" id="GO:0045087">
    <property type="term" value="P:innate immune response"/>
    <property type="evidence" value="ECO:0000315"/>
    <property type="project" value="MGI"/>
</dbReference>
<dbReference type="GO" id="GO:0032688">
    <property type="term" value="P:negative regulation of interferon-beta production"/>
    <property type="evidence" value="ECO:0000315"/>
    <property type="project" value="MGI"/>
</dbReference>
<dbReference type="GO" id="GO:0010936">
    <property type="term" value="P:negative regulation of macrophage cytokine production"/>
    <property type="evidence" value="ECO:0000315"/>
    <property type="project" value="MGI"/>
</dbReference>
<dbReference type="GO" id="GO:0097300">
    <property type="term" value="P:programmed necrotic cell death"/>
    <property type="evidence" value="ECO:0000315"/>
    <property type="project" value="UniProtKB"/>
</dbReference>
<dbReference type="GO" id="GO:0034067">
    <property type="term" value="P:protein localization to Golgi apparatus"/>
    <property type="evidence" value="ECO:0000315"/>
    <property type="project" value="MGI"/>
</dbReference>
<dbReference type="InterPro" id="IPR007241">
    <property type="entry name" value="Autophagy-rel_prot_9"/>
</dbReference>
<dbReference type="PANTHER" id="PTHR13038">
    <property type="entry name" value="APG9 AUTOPHAGY 9"/>
    <property type="match status" value="1"/>
</dbReference>
<dbReference type="PANTHER" id="PTHR13038:SF13">
    <property type="entry name" value="AUTOPHAGY-RELATED PROTEIN 9A"/>
    <property type="match status" value="1"/>
</dbReference>
<dbReference type="Pfam" id="PF04109">
    <property type="entry name" value="ATG9"/>
    <property type="match status" value="1"/>
</dbReference>
<reference key="1">
    <citation type="submission" date="2005-09" db="EMBL/GenBank/DDBJ databases">
        <title>Phylogeny and biochemistry of the autophagy protein beclin 1.</title>
        <authorList>
            <person name="Botti J."/>
            <person name="Djavaheri-Mergny M."/>
            <person name="Codogno P."/>
            <person name="Oriol R."/>
        </authorList>
    </citation>
    <scope>NUCLEOTIDE SEQUENCE [MRNA] (ISOFORM 1)</scope>
    <source>
        <strain>BALB/cJ</strain>
    </source>
</reference>
<reference key="2">
    <citation type="journal article" date="2009" name="PLoS Biol.">
        <title>Lineage-specific biology revealed by a finished genome assembly of the mouse.</title>
        <authorList>
            <person name="Church D.M."/>
            <person name="Goodstadt L."/>
            <person name="Hillier L.W."/>
            <person name="Zody M.C."/>
            <person name="Goldstein S."/>
            <person name="She X."/>
            <person name="Bult C.J."/>
            <person name="Agarwala R."/>
            <person name="Cherry J.L."/>
            <person name="DiCuccio M."/>
            <person name="Hlavina W."/>
            <person name="Kapustin Y."/>
            <person name="Meric P."/>
            <person name="Maglott D."/>
            <person name="Birtle Z."/>
            <person name="Marques A.C."/>
            <person name="Graves T."/>
            <person name="Zhou S."/>
            <person name="Teague B."/>
            <person name="Potamousis K."/>
            <person name="Churas C."/>
            <person name="Place M."/>
            <person name="Herschleb J."/>
            <person name="Runnheim R."/>
            <person name="Forrest D."/>
            <person name="Amos-Landgraf J."/>
            <person name="Schwartz D.C."/>
            <person name="Cheng Z."/>
            <person name="Lindblad-Toh K."/>
            <person name="Eichler E.E."/>
            <person name="Ponting C.P."/>
        </authorList>
    </citation>
    <scope>NUCLEOTIDE SEQUENCE [LARGE SCALE GENOMIC DNA]</scope>
    <source>
        <strain>C57BL/6J</strain>
    </source>
</reference>
<reference key="3">
    <citation type="journal article" date="2004" name="Genome Res.">
        <title>The status, quality, and expansion of the NIH full-length cDNA project: the Mammalian Gene Collection (MGC).</title>
        <authorList>
            <consortium name="The MGC Project Team"/>
        </authorList>
    </citation>
    <scope>NUCLEOTIDE SEQUENCE [LARGE SCALE MRNA] (ISOFORM 2)</scope>
    <source>
        <strain>C57BL/6J</strain>
        <tissue>Brain</tissue>
    </source>
</reference>
<reference key="4">
    <citation type="journal article" date="2005" name="J. Biol. Chem.">
        <title>Endothelial nitric-oxide synthase antisense (NOS3AS) gene encodes an autophagy-related protein (APG9-like2) highly expressed in trophoblast.</title>
        <authorList>
            <person name="Yamada T."/>
            <person name="Carson A.R."/>
            <person name="Caniggia I."/>
            <person name="Umebayashi K."/>
            <person name="Yoshimori T."/>
            <person name="Nakabayashi K."/>
            <person name="Scherer S.W."/>
        </authorList>
    </citation>
    <scope>IDENTIFICATION (ISOFORM 1)</scope>
    <scope>SUBCELLULAR LOCATION</scope>
</reference>
<reference key="5">
    <citation type="journal article" date="2009" name="Immunity">
        <title>The phagosomal proteome in interferon-gamma-activated macrophages.</title>
        <authorList>
            <person name="Trost M."/>
            <person name="English L."/>
            <person name="Lemieux S."/>
            <person name="Courcelles M."/>
            <person name="Desjardins M."/>
            <person name="Thibault P."/>
        </authorList>
    </citation>
    <scope>IDENTIFICATION BY MASS SPECTROMETRY [LARGE SCALE ANALYSIS]</scope>
</reference>
<reference key="6">
    <citation type="journal article" date="2009" name="Proc. Natl. Acad. Sci. U.S.A.">
        <title>Atg9a controls dsDNA-driven dynamic translocation of STING and the innate immune response.</title>
        <authorList>
            <person name="Saitoh T."/>
            <person name="Fujita N."/>
            <person name="Hayashi T."/>
            <person name="Takahara K."/>
            <person name="Satoh T."/>
            <person name="Lee H."/>
            <person name="Matsunaga K."/>
            <person name="Kageyama S."/>
            <person name="Omori H."/>
            <person name="Noda T."/>
            <person name="Yamamoto N."/>
            <person name="Kawai T."/>
            <person name="Ishii K."/>
            <person name="Takeuchi O."/>
            <person name="Yoshimori T."/>
            <person name="Akira S."/>
        </authorList>
    </citation>
    <scope>FUNCTION</scope>
    <scope>DISRUPTION PHENOTYPE</scope>
</reference>
<reference key="7">
    <citation type="journal article" date="2010" name="Cell">
        <title>A tissue-specific atlas of mouse protein phosphorylation and expression.</title>
        <authorList>
            <person name="Huttlin E.L."/>
            <person name="Jedrychowski M.P."/>
            <person name="Elias J.E."/>
            <person name="Goswami T."/>
            <person name="Rad R."/>
            <person name="Beausoleil S.A."/>
            <person name="Villen J."/>
            <person name="Haas W."/>
            <person name="Sowa M.E."/>
            <person name="Gygi S.P."/>
        </authorList>
    </citation>
    <scope>PHOSPHORYLATION [LARGE SCALE ANALYSIS] AT SER-16 AND SER-18</scope>
    <scope>IDENTIFICATION BY MASS SPECTROMETRY [LARGE SCALE ANALYSIS]</scope>
    <source>
        <tissue>Brain</tissue>
    </source>
</reference>
<reference key="8">
    <citation type="journal article" date="2013" name="Biochem. Biophys. Res. Commun.">
        <title>CCCP-Induced LC3 lipidation depends on Atg9 whereas FIP200/Atg13 and Beclin 1/Atg14 are dispensable.</title>
        <authorList>
            <person name="Chen D."/>
            <person name="Chen X."/>
            <person name="Li M."/>
            <person name="Zhang H."/>
            <person name="Ding W.X."/>
            <person name="Yin X.M."/>
        </authorList>
    </citation>
    <scope>FUNCTION</scope>
</reference>
<reference key="9">
    <citation type="journal article" date="2015" name="Reprod. Biol.">
        <title>Role of the Atg9a gene in intrauterine growth and survival of fetal mice.</title>
        <authorList>
            <person name="Kojima T."/>
            <person name="Yamada T."/>
            <person name="Akaishi R."/>
            <person name="Furuta I."/>
            <person name="Saitoh T."/>
            <person name="Nakabayashi K."/>
            <person name="Nakayama K.I."/>
            <person name="Nakayama K."/>
            <person name="Akira S."/>
            <person name="Minakami H."/>
        </authorList>
    </citation>
    <scope>DISRUPTION PHENOTYPE</scope>
</reference>
<reference key="10">
    <citation type="journal article" date="2016" name="J. Cell Sci.">
        <title>Atg9A trafficking through the recycling endosomes is required for autophagosome formation.</title>
        <authorList>
            <person name="Imai K."/>
            <person name="Hao F."/>
            <person name="Fujita N."/>
            <person name="Tsuji Y."/>
            <person name="Oe Y."/>
            <person name="Araki Y."/>
            <person name="Hamasaki M."/>
            <person name="Noda T."/>
            <person name="Yoshimori T."/>
        </authorList>
    </citation>
    <scope>FUNCTION</scope>
    <scope>SUBCELLULAR LOCATION</scope>
    <scope>MUTAGENESIS OF 8-TYR--LEU-11 AND 22-GLU--VAL-27</scope>
</reference>
<reference key="11">
    <citation type="journal article" date="2016" name="Nat. Commun.">
        <title>Vital staining for cell death identifies Atg9a-dependent necrosis in developmental bone formation in mouse.</title>
        <authorList>
            <person name="Imagawa Y."/>
            <person name="Saitoh T."/>
            <person name="Tsujimoto Y."/>
        </authorList>
    </citation>
    <scope>FUNCTION</scope>
    <scope>DISRUPTION PHENOTYPE</scope>
</reference>
<reference key="12">
    <citation type="journal article" date="2018" name="Autophagy">
        <title>Atg9a deficiency causes axon-specific lesions including neuronal circuit dysgenesis.</title>
        <authorList>
            <person name="Yamaguchi J."/>
            <person name="Suzuki C."/>
            <person name="Nanao T."/>
            <person name="Kakuta S."/>
            <person name="Ozawa K."/>
            <person name="Tanida I."/>
            <person name="Saitoh T."/>
            <person name="Sunabori T."/>
            <person name="Komatsu M."/>
            <person name="Tanaka K."/>
            <person name="Aoki S."/>
            <person name="Sakimura K."/>
            <person name="Uchiyama Y."/>
        </authorList>
    </citation>
    <scope>DISRUPTION PHENOTYPE</scope>
</reference>
<reference key="13">
    <citation type="journal article" date="2023" name="Cell. Mol. Life Sci.">
        <title>A neuroprotective role of Ufmylation through Atg9 in the aging brain of Drosophila.</title>
        <authorList>
            <person name="Li H."/>
            <person name="Yu Z."/>
            <person name="Niu Z."/>
            <person name="Cheng Y."/>
            <person name="Wei Z."/>
            <person name="Cai Y."/>
            <person name="Ma F."/>
            <person name="Hu L."/>
            <person name="Zhu J."/>
            <person name="Zhang W."/>
        </authorList>
    </citation>
    <scope>UFMYLATION</scope>
</reference>
<name>ATG9A_MOUSE</name>
<organism>
    <name type="scientific">Mus musculus</name>
    <name type="common">Mouse</name>
    <dbReference type="NCBI Taxonomy" id="10090"/>
    <lineage>
        <taxon>Eukaryota</taxon>
        <taxon>Metazoa</taxon>
        <taxon>Chordata</taxon>
        <taxon>Craniata</taxon>
        <taxon>Vertebrata</taxon>
        <taxon>Euteleostomi</taxon>
        <taxon>Mammalia</taxon>
        <taxon>Eutheria</taxon>
        <taxon>Euarchontoglires</taxon>
        <taxon>Glires</taxon>
        <taxon>Rodentia</taxon>
        <taxon>Myomorpha</taxon>
        <taxon>Muroidea</taxon>
        <taxon>Muridae</taxon>
        <taxon>Murinae</taxon>
        <taxon>Mus</taxon>
        <taxon>Mus</taxon>
    </lineage>
</organism>
<feature type="initiator methionine" description="Removed" evidence="1">
    <location>
        <position position="1"/>
    </location>
</feature>
<feature type="chain" id="PRO_0000119821" description="Autophagy-related protein 9A">
    <location>
        <begin position="2"/>
        <end position="839"/>
    </location>
</feature>
<feature type="topological domain" description="Cytoplasmic" evidence="14">
    <location>
        <begin position="2"/>
        <end position="61"/>
    </location>
</feature>
<feature type="transmembrane region" description="Helical" evidence="1">
    <location>
        <begin position="62"/>
        <end position="84"/>
    </location>
</feature>
<feature type="topological domain" description="Lumenal" evidence="14">
    <location>
        <begin position="85"/>
        <end position="128"/>
    </location>
</feature>
<feature type="transmembrane region" description="Helical" evidence="1">
    <location>
        <begin position="129"/>
        <end position="154"/>
    </location>
</feature>
<feature type="topological domain" description="Cytoplasmic" evidence="14">
    <location>
        <begin position="155"/>
        <end position="290"/>
    </location>
</feature>
<feature type="intramembrane region" evidence="1">
    <location>
        <begin position="291"/>
        <end position="301"/>
    </location>
</feature>
<feature type="topological domain" description="Cytoplasmic" evidence="14">
    <location>
        <begin position="302"/>
        <end position="319"/>
    </location>
</feature>
<feature type="intramembrane region" evidence="1">
    <location>
        <begin position="320"/>
        <end position="328"/>
    </location>
</feature>
<feature type="topological domain" description="Cytoplasmic" evidence="14">
    <location>
        <begin position="329"/>
        <end position="371"/>
    </location>
</feature>
<feature type="transmembrane region" description="Helical" evidence="1">
    <location>
        <begin position="372"/>
        <end position="397"/>
    </location>
</feature>
<feature type="topological domain" description="Lumenal" evidence="14">
    <location>
        <begin position="398"/>
        <end position="406"/>
    </location>
</feature>
<feature type="transmembrane region" description="Helical" evidence="1">
    <location>
        <begin position="407"/>
        <end position="424"/>
    </location>
</feature>
<feature type="topological domain" description="Cytoplasmic" evidence="14">
    <location>
        <begin position="425"/>
        <end position="470"/>
    </location>
</feature>
<feature type="intramembrane region" evidence="1">
    <location>
        <begin position="471"/>
        <end position="480"/>
    </location>
</feature>
<feature type="topological domain" description="Cytoplasmic" evidence="14">
    <location>
        <begin position="481"/>
        <end position="483"/>
    </location>
</feature>
<feature type="intramembrane region" evidence="1">
    <location>
        <begin position="484"/>
        <end position="492"/>
    </location>
</feature>
<feature type="topological domain" description="Cytoplasmic" evidence="14">
    <location>
        <begin position="493"/>
        <end position="839"/>
    </location>
</feature>
<feature type="region of interest" description="Disordered" evidence="3">
    <location>
        <begin position="657"/>
        <end position="686"/>
    </location>
</feature>
<feature type="region of interest" description="Disordered" evidence="3">
    <location>
        <begin position="717"/>
        <end position="839"/>
    </location>
</feature>
<feature type="short sequence motif" description="Tyrosine-based sorting signal" evidence="1">
    <location>
        <begin position="8"/>
        <end position="11"/>
    </location>
</feature>
<feature type="compositionally biased region" description="Basic and acidic residues" evidence="3">
    <location>
        <begin position="724"/>
        <end position="736"/>
    </location>
</feature>
<feature type="compositionally biased region" description="Acidic residues" evidence="3">
    <location>
        <begin position="737"/>
        <end position="747"/>
    </location>
</feature>
<feature type="compositionally biased region" description="Acidic residues" evidence="3">
    <location>
        <begin position="823"/>
        <end position="832"/>
    </location>
</feature>
<feature type="modified residue" description="N-acetylalanine" evidence="1">
    <location>
        <position position="2"/>
    </location>
</feature>
<feature type="modified residue" description="Phosphoserine" evidence="1">
    <location>
        <position position="14"/>
    </location>
</feature>
<feature type="modified residue" description="Phosphoserine" evidence="16">
    <location>
        <position position="16"/>
    </location>
</feature>
<feature type="modified residue" description="Phosphoserine" evidence="16">
    <location>
        <position position="18"/>
    </location>
</feature>
<feature type="modified residue" description="Phosphoserine" evidence="1">
    <location>
        <position position="656"/>
    </location>
</feature>
<feature type="modified residue" description="Phosphoserine" evidence="1">
    <location>
        <position position="735"/>
    </location>
</feature>
<feature type="modified residue" description="Phosphoserine" evidence="1">
    <location>
        <position position="738"/>
    </location>
</feature>
<feature type="modified residue" description="Phosphoserine" evidence="1">
    <location>
        <position position="741"/>
    </location>
</feature>
<feature type="modified residue" description="Phosphoserine" evidence="1">
    <location>
        <position position="828"/>
    </location>
</feature>
<feature type="glycosylation site" description="N-linked (GlcNAc...) asparagine" evidence="2">
    <location>
        <position position="99"/>
    </location>
</feature>
<feature type="splice variant" id="VSP_061206" description="In isoform 2.">
    <original>NAHRSQTRDEFAQLFQYKAVFILEELLSPIVTPLILIFCLRPRALEIIDFFRNFTVEVVGVGDTCSFAQMDVRQHGHPQWLSGGQTEASVYQQAEDG</original>
    <variation>VHLGGVAESHRHTPHSHLLPPPSGPGDHRLLPQLYGRGRGCGRHLLLCSDGRSPAWPSSVAVWRADRGLSVPASRGREDRVVAHALCHHQSRLAAPS</variation>
    <location>
        <begin position="455"/>
        <end position="551"/>
    </location>
</feature>
<feature type="splice variant" id="VSP_061207" description="In isoform 2.">
    <location>
        <begin position="552"/>
        <end position="839"/>
    </location>
</feature>
<feature type="mutagenesis site" description="Decreased localization to the Golgi apparatus; when associated with 22-A--A-27." evidence="8">
    <original>YQRL</original>
    <variation>AAAA</variation>
    <location>
        <begin position="8"/>
        <end position="11"/>
    </location>
</feature>
<feature type="mutagenesis site" description="Decreased localization to the Golgi apparatus; when associated with 8-A--A-11." evidence="8">
    <original>EEDLLV</original>
    <variation>AAAAA</variation>
    <location>
        <begin position="22"/>
        <end position="27"/>
    </location>
</feature>
<sequence>MAQFDTEYQRLEASYSDSPPGEEDLLVHVAEGSKSPWHHIENLDLFFSRVYNLHQKNGFTCMLIGEMFELMQFLFVVAFTTFLVSCVDYDILFANKMVNHSLHPTEPVKVTLPDAFLPAQVCSARIQENGSLITILVIAGVFWIHRLIKFIYNICCYWEIHSFYLHALRIPMSALPYCTWQEVQARIVQTQKEHQICIHKRELTELDIYHRILRFQNYMVALVNKSLLPLRFRLPGLGEVVFFTRGLKYNFELILFWGPGSLFLNEWSLKAEYKRGGQRLELAQRLSNRILWIGIANFLLCPLILIWQILYAFFSYAEVLKREPGALGARCWSLYGRCYLRHFNELEHELQSRLNRGYKPASKYMNCFLSPLLTLLAKNGAFFAGSILAVLIALTIYDEDVLAVEHVLTTVTLLGVTVTVCRSFIPDQHMVFCPEQLLRVILAHIHYMPDHWQGNAHRSQTRDEFAQLFQYKAVFILEELLSPIVTPLILIFCLRPRALEIIDFFRNFTVEVVGVGDTCSFAQMDVRQHGHPQWLSGGQTEASVYQQAEDGKTELSLMHFAITNPGWQPPRESTAFLGFLKEQVQRDGAAAGLAQGGLLPENALFTSIQSLQSESEPLSLIANVVAGSSCRGPSLSRDLQGSRHRADVASALRSFSPLQPGAAPQGRVPSTMTGSGVDARTASSGSSVWEGQLQSLVLSEYASTEMSLHALYMHQLHKQQTQAEPERHVWHRRESDESGESAPEEGGEGARAPQPIPRSASYPCATPRPGAPETTALHGGFQRRYGGITDPGTVPRGPSHFSRLPLGGWAEDGQPASRHPEPVPEEGSEDELPPQVHKV</sequence>
<gene>
    <name evidence="13 15" type="primary">Atg9a</name>
    <name evidence="12" type="synonym">Apg9l1</name>
</gene>
<comment type="function">
    <text evidence="1 6 8 9">Phospholipid scramblase involved in autophagy by mediating autophagosomal membrane expansion (PubMed:23402761, PubMed:27587839). Cycles between the preautophagosomal structure/phagophore assembly site (PAS) and the cytoplasmic vesicle pool and supplies membrane for the growing autophagosome (By similarity). Lipid scramblase activity plays a key role in preautophagosomal structure/phagophore assembly by distributing the phospholipids that arrive through ATG2 (ATG2A or ATG2B) from the cytoplasmic to the luminal leaflet of the bilayer, thereby driving autophagosomal membrane expansion (By similarity). Also required to supply phosphatidylinositol 4-phosphate to the autophagosome initiation site by recruiting the phosphatidylinositol 4-kinase beta (PI4KB) in a process dependent on ARFIP2, but not ARFIP1 (By similarity). In addition to autophagy, also plays a role in necrotic cell death (PubMed:27811852).</text>
</comment>
<comment type="catalytic activity">
    <reaction evidence="1">
        <text>a 1,2-diacyl-sn-glycero-3-phosphocholine(in) = a 1,2-diacyl-sn-glycero-3-phosphocholine(out)</text>
        <dbReference type="Rhea" id="RHEA:38571"/>
        <dbReference type="ChEBI" id="CHEBI:57643"/>
    </reaction>
</comment>
<comment type="catalytic activity">
    <reaction evidence="1">
        <text>a 1,2-diacyl-sn-glycero-3-phospho-L-serine(in) = a 1,2-diacyl-sn-glycero-3-phospho-L-serine(out)</text>
        <dbReference type="Rhea" id="RHEA:38663"/>
        <dbReference type="ChEBI" id="CHEBI:57262"/>
    </reaction>
</comment>
<comment type="catalytic activity">
    <reaction evidence="1">
        <text>a 1,2-diacyl-sn-glycero-3-phosphoethanolamine(in) = a 1,2-diacyl-sn-glycero-3-phosphoethanolamine(out)</text>
        <dbReference type="Rhea" id="RHEA:38895"/>
        <dbReference type="ChEBI" id="CHEBI:64612"/>
    </reaction>
</comment>
<comment type="subunit">
    <text evidence="1">Homotrimer; forms a homotrimer with a central pore that forms a path between the two membrane leaflets (By similarity). Interacts (via cytoplasmic its C-terminus) with ATG2A (By similarity). Interacts with SUPT20H (By similarity). Interacts (via the tyrosine-based sorting signal motif) with AP4M1; promoting association with the AP-4 complex (By similarity). Interacts with ARFIP1 and ARFIP2 (By similarity). Interacts with ATG4A; the interaction is direct and promotes ATG9A trafficking (By similarity).</text>
</comment>
<comment type="subcellular location">
    <subcellularLocation>
        <location evidence="1">Preautophagosomal structure membrane</location>
        <topology evidence="1">Multi-pass membrane protein</topology>
    </subcellularLocation>
    <subcellularLocation>
        <location evidence="4">Cytoplasmic vesicle</location>
        <location evidence="4">Autophagosome membrane</location>
        <topology evidence="1">Multi-pass membrane protein</topology>
    </subcellularLocation>
    <subcellularLocation>
        <location evidence="8">Golgi apparatus</location>
        <location evidence="8">trans-Golgi network membrane</location>
        <topology evidence="1">Multi-pass membrane protein</topology>
    </subcellularLocation>
    <subcellularLocation>
        <location evidence="1">Late endosome membrane</location>
        <topology evidence="1">Multi-pass membrane protein</topology>
    </subcellularLocation>
    <subcellularLocation>
        <location evidence="8">Recycling endosome membrane</location>
        <topology evidence="1">Multi-pass membrane protein</topology>
    </subcellularLocation>
    <subcellularLocation>
        <location evidence="1">Endoplasmic reticulum membrane</location>
        <topology evidence="1">Multi-pass membrane protein</topology>
    </subcellularLocation>
    <subcellularLocation>
        <location evidence="1">Mitochondrion membrane</location>
        <topology evidence="2">Multi-pass membrane protein</topology>
    </subcellularLocation>
    <text evidence="1 8">Mainly localizes to the trans-Golgi network (TGN) and the endosomal system; cycles between them though vesicle trafficking (PubMed:27587839). Export from the TGN to promote formation of autophagosomes is mediated by the AP-4 complex. Under amino acid starvation or rapamycin treatment, redistributes to preautophagosomal structure/phagophore assembly site (PAS). The starvation-induced redistribution depends on ULK1, ATG13, as well as SH3GLB1. Upon autophagy induction, a portion of transiently localizes to the autophagic membranes (By similarity). Recruited to damaged mitochondria during mitophagy in a RIMOC1-dependent manner (By similarity).</text>
</comment>
<comment type="alternative products">
    <event type="alternative splicing"/>
    <isoform>
        <id>Q68FE2-1</id>
        <name>1</name>
        <sequence type="displayed"/>
    </isoform>
    <isoform>
        <id>Q68FE2-2</id>
        <name>2</name>
        <sequence type="described" ref="VSP_061206 VSP_061207"/>
    </isoform>
</comment>
<comment type="domain">
    <text evidence="1">Forms a homotrimer with a solvated central pore, which is connected laterally to the cytosol through the cavity within each protomer. Acts as a lipid scramblase that uses its central pore to function: the central pore opens laterally to accommodate lipid headgroups, thereby enabling lipid flipping and redistribution of lipids added to the outer leaflet of ATG9A-containing vesicles, thereby enabling growth into autophagosomes.</text>
</comment>
<comment type="domain">
    <text evidence="1">The tyrosine-based sorting signal motif, also named YXX-psi motif, promotes interaction with the AP-4 complex.</text>
</comment>
<comment type="PTM">
    <text evidence="11">Ufmylated in a DDRGK1 dependent manner.</text>
</comment>
<comment type="disruption phenotype">
    <text evidence="5 7 9 10">Lethality; mice die within one day after birth caused by impaired autophagy (PubMed:19926846). Mice also show aberrant activation of the innate immune response (PubMed:19926846). Fetal mice display significantly retarded growth (PubMed:26370455). Conditional deletion in brain causes axon-specific degeneration: mice were born normally, but half of them die within one week, and none live beyond 4 weeks of age (PubMed:28513333). Defects are caused by impaired autophagy in neurons, leading to progressive degeneration in the axons and their terminals, but not in neuronal cell bodies (PubMed:28513333). In addition to defects in autophagy, mice also display impaired necrotic cell death during bone morphogenesis: the bone surface is rougher and bones are more porous due to defects in necrotic cell death in bone surface formation (PubMed:27811852).</text>
</comment>
<comment type="similarity">
    <text evidence="14">Belongs to the ATG9 family.</text>
</comment>
<evidence type="ECO:0000250" key="1">
    <source>
        <dbReference type="UniProtKB" id="Q7Z3C6"/>
    </source>
</evidence>
<evidence type="ECO:0000255" key="2"/>
<evidence type="ECO:0000256" key="3">
    <source>
        <dbReference type="SAM" id="MobiDB-lite"/>
    </source>
</evidence>
<evidence type="ECO:0000269" key="4">
    <source>
    </source>
</evidence>
<evidence type="ECO:0000269" key="5">
    <source>
    </source>
</evidence>
<evidence type="ECO:0000269" key="6">
    <source>
    </source>
</evidence>
<evidence type="ECO:0000269" key="7">
    <source>
    </source>
</evidence>
<evidence type="ECO:0000269" key="8">
    <source>
    </source>
</evidence>
<evidence type="ECO:0000269" key="9">
    <source>
    </source>
</evidence>
<evidence type="ECO:0000269" key="10">
    <source>
    </source>
</evidence>
<evidence type="ECO:0000269" key="11">
    <source>
    </source>
</evidence>
<evidence type="ECO:0000303" key="12">
    <source>
    </source>
</evidence>
<evidence type="ECO:0000303" key="13">
    <source>
    </source>
</evidence>
<evidence type="ECO:0000305" key="14"/>
<evidence type="ECO:0000312" key="15">
    <source>
        <dbReference type="MGI" id="MGI:2138446"/>
    </source>
</evidence>
<evidence type="ECO:0007744" key="16">
    <source>
    </source>
</evidence>
<accession>Q68FE2</accession>
<accession>Q3ZAQ4</accession>
<proteinExistence type="evidence at protein level"/>
<keyword id="KW-0007">Acetylation</keyword>
<keyword id="KW-0025">Alternative splicing</keyword>
<keyword id="KW-0072">Autophagy</keyword>
<keyword id="KW-0968">Cytoplasmic vesicle</keyword>
<keyword id="KW-0256">Endoplasmic reticulum</keyword>
<keyword id="KW-0967">Endosome</keyword>
<keyword id="KW-0325">Glycoprotein</keyword>
<keyword id="KW-0333">Golgi apparatus</keyword>
<keyword id="KW-0445">Lipid transport</keyword>
<keyword id="KW-0472">Membrane</keyword>
<keyword id="KW-0496">Mitochondrion</keyword>
<keyword id="KW-0597">Phosphoprotein</keyword>
<keyword id="KW-1185">Reference proteome</keyword>
<keyword id="KW-0812">Transmembrane</keyword>
<keyword id="KW-1133">Transmembrane helix</keyword>
<keyword id="KW-0813">Transport</keyword>
<keyword id="KW-0832">Ubl conjugation</keyword>